<proteinExistence type="inferred from homology"/>
<feature type="chain" id="PRO_1000120272" description="GMP synthase [glutamine-hydrolyzing]">
    <location>
        <begin position="1"/>
        <end position="542"/>
    </location>
</feature>
<feature type="domain" description="Glutamine amidotransferase type-1" evidence="1">
    <location>
        <begin position="28"/>
        <end position="218"/>
    </location>
</feature>
<feature type="domain" description="GMPS ATP-PPase" evidence="1">
    <location>
        <begin position="219"/>
        <end position="417"/>
    </location>
</feature>
<feature type="active site" description="Nucleophile" evidence="1">
    <location>
        <position position="105"/>
    </location>
</feature>
<feature type="active site" evidence="1">
    <location>
        <position position="192"/>
    </location>
</feature>
<feature type="active site" evidence="1">
    <location>
        <position position="194"/>
    </location>
</feature>
<feature type="binding site" evidence="1">
    <location>
        <begin position="246"/>
        <end position="252"/>
    </location>
    <ligand>
        <name>ATP</name>
        <dbReference type="ChEBI" id="CHEBI:30616"/>
    </ligand>
</feature>
<evidence type="ECO:0000255" key="1">
    <source>
        <dbReference type="HAMAP-Rule" id="MF_00344"/>
    </source>
</evidence>
<organism>
    <name type="scientific">Rippkaea orientalis (strain PCC 8801 / RF-1)</name>
    <name type="common">Cyanothece sp. (strain PCC 8801)</name>
    <dbReference type="NCBI Taxonomy" id="41431"/>
    <lineage>
        <taxon>Bacteria</taxon>
        <taxon>Bacillati</taxon>
        <taxon>Cyanobacteriota</taxon>
        <taxon>Cyanophyceae</taxon>
        <taxon>Oscillatoriophycideae</taxon>
        <taxon>Chroococcales</taxon>
        <taxon>Aphanothecaceae</taxon>
        <taxon>Rippkaea</taxon>
        <taxon>Rippkaea orientalis</taxon>
    </lineage>
</organism>
<sequence length="542" mass="61149">MTTQTPPITNPSEKLPTEPINKALNRQMLVILDFGSQYSELIARRIRETQVYSEVLSYRTTIEQIRQLNPRGIILSGGPNSVYDNRAPQCDPEIFHLGVPILGVCYGMQLMVQQLGGQVERAKRGEYGKASLFIDDPTDLLTNVEDGSTMWMSHGDSCTQLPEGFDILAHTENTSCAAIAHHQKKLFGVQFHPEVVHSVGGIALIRNFVYHICQCEPTWTTEAFVEESIREIRAKVGDKRVLLALSGGVDSSTLAFLLHRAIGDNLTCMFIDQGFMRKGEPERLVEIFDKQFHIPVEYVNARTRFLEQLAGVTDPETKRRLIGHEFIQVFEEESERLGPFDYLAQGTLYPDVIESADTNVDPQTGERVAVKIKSHHNVGGLPKNLRFKLVEPLRKLFKDEVRKLGRAIGLPEEIVRRHPFPGPGLAIRIIGEVTAERLNILRDADFIVRDEISKQGMYHDFWQAFAVLLPVRSVGVMGDRRTYAHPIVLRLITSEDGMTADWAKVPYDLLETISNRIVNEVKGVNRVVYDITSKPPGTIEWE</sequence>
<comment type="function">
    <text evidence="1">Catalyzes the synthesis of GMP from XMP.</text>
</comment>
<comment type="catalytic activity">
    <reaction evidence="1">
        <text>XMP + L-glutamine + ATP + H2O = GMP + L-glutamate + AMP + diphosphate + 2 H(+)</text>
        <dbReference type="Rhea" id="RHEA:11680"/>
        <dbReference type="ChEBI" id="CHEBI:15377"/>
        <dbReference type="ChEBI" id="CHEBI:15378"/>
        <dbReference type="ChEBI" id="CHEBI:29985"/>
        <dbReference type="ChEBI" id="CHEBI:30616"/>
        <dbReference type="ChEBI" id="CHEBI:33019"/>
        <dbReference type="ChEBI" id="CHEBI:57464"/>
        <dbReference type="ChEBI" id="CHEBI:58115"/>
        <dbReference type="ChEBI" id="CHEBI:58359"/>
        <dbReference type="ChEBI" id="CHEBI:456215"/>
        <dbReference type="EC" id="6.3.5.2"/>
    </reaction>
</comment>
<comment type="pathway">
    <text evidence="1">Purine metabolism; GMP biosynthesis; GMP from XMP (L-Gln route): step 1/1.</text>
</comment>
<comment type="subunit">
    <text evidence="1">Homodimer.</text>
</comment>
<keyword id="KW-0067">ATP-binding</keyword>
<keyword id="KW-0315">Glutamine amidotransferase</keyword>
<keyword id="KW-0332">GMP biosynthesis</keyword>
<keyword id="KW-0436">Ligase</keyword>
<keyword id="KW-0547">Nucleotide-binding</keyword>
<keyword id="KW-0658">Purine biosynthesis</keyword>
<keyword id="KW-1185">Reference proteome</keyword>
<name>GUAA_RIPO1</name>
<dbReference type="EC" id="6.3.5.2" evidence="1"/>
<dbReference type="EMBL" id="CP001287">
    <property type="protein sequence ID" value="ACK64779.1"/>
    <property type="molecule type" value="Genomic_DNA"/>
</dbReference>
<dbReference type="RefSeq" id="WP_012594055.1">
    <property type="nucleotide sequence ID" value="NC_011726.1"/>
</dbReference>
<dbReference type="SMR" id="B7JXM2"/>
<dbReference type="STRING" id="41431.PCC8801_0694"/>
<dbReference type="MEROPS" id="C26.957"/>
<dbReference type="KEGG" id="cyp:PCC8801_0694"/>
<dbReference type="eggNOG" id="COG0518">
    <property type="taxonomic scope" value="Bacteria"/>
</dbReference>
<dbReference type="eggNOG" id="COG0519">
    <property type="taxonomic scope" value="Bacteria"/>
</dbReference>
<dbReference type="HOGENOM" id="CLU_014340_0_5_3"/>
<dbReference type="OrthoDB" id="9802219at2"/>
<dbReference type="UniPathway" id="UPA00189">
    <property type="reaction ID" value="UER00296"/>
</dbReference>
<dbReference type="Proteomes" id="UP000008204">
    <property type="component" value="Chromosome"/>
</dbReference>
<dbReference type="GO" id="GO:0005829">
    <property type="term" value="C:cytosol"/>
    <property type="evidence" value="ECO:0007669"/>
    <property type="project" value="TreeGrafter"/>
</dbReference>
<dbReference type="GO" id="GO:0005524">
    <property type="term" value="F:ATP binding"/>
    <property type="evidence" value="ECO:0007669"/>
    <property type="project" value="UniProtKB-UniRule"/>
</dbReference>
<dbReference type="GO" id="GO:0003921">
    <property type="term" value="F:GMP synthase activity"/>
    <property type="evidence" value="ECO:0007669"/>
    <property type="project" value="InterPro"/>
</dbReference>
<dbReference type="CDD" id="cd01742">
    <property type="entry name" value="GATase1_GMP_Synthase"/>
    <property type="match status" value="1"/>
</dbReference>
<dbReference type="CDD" id="cd01997">
    <property type="entry name" value="GMP_synthase_C"/>
    <property type="match status" value="1"/>
</dbReference>
<dbReference type="FunFam" id="3.30.300.10:FF:000002">
    <property type="entry name" value="GMP synthase [glutamine-hydrolyzing]"/>
    <property type="match status" value="1"/>
</dbReference>
<dbReference type="FunFam" id="3.40.50.620:FF:000001">
    <property type="entry name" value="GMP synthase [glutamine-hydrolyzing]"/>
    <property type="match status" value="1"/>
</dbReference>
<dbReference type="FunFam" id="3.40.50.880:FF:000001">
    <property type="entry name" value="GMP synthase [glutamine-hydrolyzing]"/>
    <property type="match status" value="1"/>
</dbReference>
<dbReference type="Gene3D" id="3.30.300.10">
    <property type="match status" value="1"/>
</dbReference>
<dbReference type="Gene3D" id="3.40.50.880">
    <property type="match status" value="1"/>
</dbReference>
<dbReference type="Gene3D" id="3.40.50.620">
    <property type="entry name" value="HUPs"/>
    <property type="match status" value="1"/>
</dbReference>
<dbReference type="HAMAP" id="MF_00344">
    <property type="entry name" value="GMP_synthase"/>
    <property type="match status" value="1"/>
</dbReference>
<dbReference type="InterPro" id="IPR029062">
    <property type="entry name" value="Class_I_gatase-like"/>
</dbReference>
<dbReference type="InterPro" id="IPR017926">
    <property type="entry name" value="GATASE"/>
</dbReference>
<dbReference type="InterPro" id="IPR001674">
    <property type="entry name" value="GMP_synth_C"/>
</dbReference>
<dbReference type="InterPro" id="IPR004739">
    <property type="entry name" value="GMP_synth_GATase"/>
</dbReference>
<dbReference type="InterPro" id="IPR022955">
    <property type="entry name" value="GMP_synthase"/>
</dbReference>
<dbReference type="InterPro" id="IPR025777">
    <property type="entry name" value="GMPS_ATP_PPase_dom"/>
</dbReference>
<dbReference type="InterPro" id="IPR014729">
    <property type="entry name" value="Rossmann-like_a/b/a_fold"/>
</dbReference>
<dbReference type="NCBIfam" id="TIGR00884">
    <property type="entry name" value="guaA_Cterm"/>
    <property type="match status" value="1"/>
</dbReference>
<dbReference type="NCBIfam" id="TIGR00888">
    <property type="entry name" value="guaA_Nterm"/>
    <property type="match status" value="1"/>
</dbReference>
<dbReference type="NCBIfam" id="NF000848">
    <property type="entry name" value="PRK00074.1"/>
    <property type="match status" value="1"/>
</dbReference>
<dbReference type="PANTHER" id="PTHR11922:SF2">
    <property type="entry name" value="GMP SYNTHASE [GLUTAMINE-HYDROLYZING]"/>
    <property type="match status" value="1"/>
</dbReference>
<dbReference type="PANTHER" id="PTHR11922">
    <property type="entry name" value="GMP SYNTHASE-RELATED"/>
    <property type="match status" value="1"/>
</dbReference>
<dbReference type="Pfam" id="PF00117">
    <property type="entry name" value="GATase"/>
    <property type="match status" value="1"/>
</dbReference>
<dbReference type="Pfam" id="PF00958">
    <property type="entry name" value="GMP_synt_C"/>
    <property type="match status" value="1"/>
</dbReference>
<dbReference type="PRINTS" id="PR00097">
    <property type="entry name" value="ANTSNTHASEII"/>
</dbReference>
<dbReference type="PRINTS" id="PR00099">
    <property type="entry name" value="CPSGATASE"/>
</dbReference>
<dbReference type="PRINTS" id="PR00096">
    <property type="entry name" value="GATASE"/>
</dbReference>
<dbReference type="SUPFAM" id="SSF52402">
    <property type="entry name" value="Adenine nucleotide alpha hydrolases-like"/>
    <property type="match status" value="1"/>
</dbReference>
<dbReference type="SUPFAM" id="SSF52317">
    <property type="entry name" value="Class I glutamine amidotransferase-like"/>
    <property type="match status" value="1"/>
</dbReference>
<dbReference type="SUPFAM" id="SSF54810">
    <property type="entry name" value="GMP synthetase C-terminal dimerisation domain"/>
    <property type="match status" value="1"/>
</dbReference>
<dbReference type="PROSITE" id="PS51273">
    <property type="entry name" value="GATASE_TYPE_1"/>
    <property type="match status" value="1"/>
</dbReference>
<dbReference type="PROSITE" id="PS51553">
    <property type="entry name" value="GMPS_ATP_PPASE"/>
    <property type="match status" value="1"/>
</dbReference>
<reference key="1">
    <citation type="journal article" date="2011" name="MBio">
        <title>Novel metabolic attributes of the genus Cyanothece, comprising a group of unicellular nitrogen-fixing Cyanobacteria.</title>
        <authorList>
            <person name="Bandyopadhyay A."/>
            <person name="Elvitigala T."/>
            <person name="Welsh E."/>
            <person name="Stockel J."/>
            <person name="Liberton M."/>
            <person name="Min H."/>
            <person name="Sherman L.A."/>
            <person name="Pakrasi H.B."/>
        </authorList>
    </citation>
    <scope>NUCLEOTIDE SEQUENCE [LARGE SCALE GENOMIC DNA]</scope>
    <source>
        <strain>PCC 8801 / RF-1</strain>
    </source>
</reference>
<protein>
    <recommendedName>
        <fullName evidence="1">GMP synthase [glutamine-hydrolyzing]</fullName>
        <ecNumber evidence="1">6.3.5.2</ecNumber>
    </recommendedName>
    <alternativeName>
        <fullName evidence="1">GMP synthetase</fullName>
    </alternativeName>
    <alternativeName>
        <fullName evidence="1">Glutamine amidotransferase</fullName>
    </alternativeName>
</protein>
<gene>
    <name evidence="1" type="primary">guaA</name>
    <name type="ordered locus">PCC8801_0694</name>
</gene>
<accession>B7JXM2</accession>